<gene>
    <name evidence="1" type="primary">rpsN</name>
    <name type="ordered locus">Bxeno_A4068</name>
    <name type="ORF">Bxe_A0327</name>
</gene>
<protein>
    <recommendedName>
        <fullName evidence="1">Small ribosomal subunit protein uS14</fullName>
    </recommendedName>
    <alternativeName>
        <fullName evidence="2">30S ribosomal protein S14</fullName>
    </alternativeName>
</protein>
<name>RS14_PARXL</name>
<sequence length="101" mass="11590">MAKLALIEREKKRARLAAKYAPKRAELKAIIGDMSKSDEEHYAARLELQQLPRNSNPTRKRNRCAITGRPRGTFRKFGLARNKIREIAFRGEIPGLTKASW</sequence>
<proteinExistence type="inferred from homology"/>
<reference key="1">
    <citation type="journal article" date="2006" name="Proc. Natl. Acad. Sci. U.S.A.">
        <title>Burkholderia xenovorans LB400 harbors a multi-replicon, 9.73-Mbp genome shaped for versatility.</title>
        <authorList>
            <person name="Chain P.S.G."/>
            <person name="Denef V.J."/>
            <person name="Konstantinidis K.T."/>
            <person name="Vergez L.M."/>
            <person name="Agullo L."/>
            <person name="Reyes V.L."/>
            <person name="Hauser L."/>
            <person name="Cordova M."/>
            <person name="Gomez L."/>
            <person name="Gonzalez M."/>
            <person name="Land M."/>
            <person name="Lao V."/>
            <person name="Larimer F."/>
            <person name="LiPuma J.J."/>
            <person name="Mahenthiralingam E."/>
            <person name="Malfatti S.A."/>
            <person name="Marx C.J."/>
            <person name="Parnell J.J."/>
            <person name="Ramette A."/>
            <person name="Richardson P."/>
            <person name="Seeger M."/>
            <person name="Smith D."/>
            <person name="Spilker T."/>
            <person name="Sul W.J."/>
            <person name="Tsoi T.V."/>
            <person name="Ulrich L.E."/>
            <person name="Zhulin I.B."/>
            <person name="Tiedje J.M."/>
        </authorList>
    </citation>
    <scope>NUCLEOTIDE SEQUENCE [LARGE SCALE GENOMIC DNA]</scope>
    <source>
        <strain>LB400</strain>
    </source>
</reference>
<keyword id="KW-1185">Reference proteome</keyword>
<keyword id="KW-0687">Ribonucleoprotein</keyword>
<keyword id="KW-0689">Ribosomal protein</keyword>
<keyword id="KW-0694">RNA-binding</keyword>
<keyword id="KW-0699">rRNA-binding</keyword>
<organism>
    <name type="scientific">Paraburkholderia xenovorans (strain LB400)</name>
    <dbReference type="NCBI Taxonomy" id="266265"/>
    <lineage>
        <taxon>Bacteria</taxon>
        <taxon>Pseudomonadati</taxon>
        <taxon>Pseudomonadota</taxon>
        <taxon>Betaproteobacteria</taxon>
        <taxon>Burkholderiales</taxon>
        <taxon>Burkholderiaceae</taxon>
        <taxon>Paraburkholderia</taxon>
    </lineage>
</organism>
<dbReference type="EMBL" id="CP000270">
    <property type="protein sequence ID" value="ABE32606.1"/>
    <property type="molecule type" value="Genomic_DNA"/>
</dbReference>
<dbReference type="RefSeq" id="WP_006052215.1">
    <property type="nucleotide sequence ID" value="NZ_CP008760.1"/>
</dbReference>
<dbReference type="SMR" id="Q13TI3"/>
<dbReference type="STRING" id="266265.Bxe_A0327"/>
<dbReference type="GeneID" id="97311005"/>
<dbReference type="KEGG" id="bxb:DR64_2497"/>
<dbReference type="KEGG" id="bxe:Bxe_A0327"/>
<dbReference type="eggNOG" id="COG0199">
    <property type="taxonomic scope" value="Bacteria"/>
</dbReference>
<dbReference type="OrthoDB" id="9810484at2"/>
<dbReference type="Proteomes" id="UP000001817">
    <property type="component" value="Chromosome 1"/>
</dbReference>
<dbReference type="GO" id="GO:0005737">
    <property type="term" value="C:cytoplasm"/>
    <property type="evidence" value="ECO:0007669"/>
    <property type="project" value="UniProtKB-ARBA"/>
</dbReference>
<dbReference type="GO" id="GO:0015935">
    <property type="term" value="C:small ribosomal subunit"/>
    <property type="evidence" value="ECO:0007669"/>
    <property type="project" value="TreeGrafter"/>
</dbReference>
<dbReference type="GO" id="GO:0019843">
    <property type="term" value="F:rRNA binding"/>
    <property type="evidence" value="ECO:0007669"/>
    <property type="project" value="UniProtKB-UniRule"/>
</dbReference>
<dbReference type="GO" id="GO:0003735">
    <property type="term" value="F:structural constituent of ribosome"/>
    <property type="evidence" value="ECO:0007669"/>
    <property type="project" value="InterPro"/>
</dbReference>
<dbReference type="GO" id="GO:0006412">
    <property type="term" value="P:translation"/>
    <property type="evidence" value="ECO:0007669"/>
    <property type="project" value="UniProtKB-UniRule"/>
</dbReference>
<dbReference type="FunFam" id="1.10.287.1480:FF:000001">
    <property type="entry name" value="30S ribosomal protein S14"/>
    <property type="match status" value="1"/>
</dbReference>
<dbReference type="Gene3D" id="1.10.287.1480">
    <property type="match status" value="1"/>
</dbReference>
<dbReference type="HAMAP" id="MF_00537">
    <property type="entry name" value="Ribosomal_uS14_1"/>
    <property type="match status" value="1"/>
</dbReference>
<dbReference type="InterPro" id="IPR001209">
    <property type="entry name" value="Ribosomal_uS14"/>
</dbReference>
<dbReference type="InterPro" id="IPR023036">
    <property type="entry name" value="Ribosomal_uS14_bac/plastid"/>
</dbReference>
<dbReference type="NCBIfam" id="NF006477">
    <property type="entry name" value="PRK08881.1"/>
    <property type="match status" value="1"/>
</dbReference>
<dbReference type="PANTHER" id="PTHR19836">
    <property type="entry name" value="30S RIBOSOMAL PROTEIN S14"/>
    <property type="match status" value="1"/>
</dbReference>
<dbReference type="PANTHER" id="PTHR19836:SF19">
    <property type="entry name" value="SMALL RIBOSOMAL SUBUNIT PROTEIN US14M"/>
    <property type="match status" value="1"/>
</dbReference>
<dbReference type="Pfam" id="PF00253">
    <property type="entry name" value="Ribosomal_S14"/>
    <property type="match status" value="1"/>
</dbReference>
<dbReference type="SUPFAM" id="SSF57716">
    <property type="entry name" value="Glucocorticoid receptor-like (DNA-binding domain)"/>
    <property type="match status" value="1"/>
</dbReference>
<feature type="chain" id="PRO_1000128346" description="Small ribosomal subunit protein uS14">
    <location>
        <begin position="1"/>
        <end position="101"/>
    </location>
</feature>
<accession>Q13TI3</accession>
<evidence type="ECO:0000255" key="1">
    <source>
        <dbReference type="HAMAP-Rule" id="MF_00537"/>
    </source>
</evidence>
<evidence type="ECO:0000305" key="2"/>
<comment type="function">
    <text evidence="1">Binds 16S rRNA, required for the assembly of 30S particles and may also be responsible for determining the conformation of the 16S rRNA at the A site.</text>
</comment>
<comment type="subunit">
    <text evidence="1">Part of the 30S ribosomal subunit. Contacts proteins S3 and S10.</text>
</comment>
<comment type="similarity">
    <text evidence="1">Belongs to the universal ribosomal protein uS14 family.</text>
</comment>